<comment type="function">
    <text evidence="1">Catalyzes the dephosphorylation of undecaprenyl diphosphate (UPP). Confers resistance to bacitracin.</text>
</comment>
<comment type="catalytic activity">
    <reaction evidence="1">
        <text>di-trans,octa-cis-undecaprenyl diphosphate + H2O = di-trans,octa-cis-undecaprenyl phosphate + phosphate + H(+)</text>
        <dbReference type="Rhea" id="RHEA:28094"/>
        <dbReference type="ChEBI" id="CHEBI:15377"/>
        <dbReference type="ChEBI" id="CHEBI:15378"/>
        <dbReference type="ChEBI" id="CHEBI:43474"/>
        <dbReference type="ChEBI" id="CHEBI:58405"/>
        <dbReference type="ChEBI" id="CHEBI:60392"/>
        <dbReference type="EC" id="3.6.1.27"/>
    </reaction>
</comment>
<comment type="subcellular location">
    <subcellularLocation>
        <location evidence="1">Cell inner membrane</location>
        <topology evidence="1">Multi-pass membrane protein</topology>
    </subcellularLocation>
</comment>
<comment type="miscellaneous">
    <text>Bacitracin is thought to be involved in the inhibition of peptidoglycan synthesis by sequestering undecaprenyl diphosphate, thereby reducing the pool of lipid carrier available.</text>
</comment>
<comment type="similarity">
    <text evidence="1">Belongs to the UppP family.</text>
</comment>
<organism>
    <name type="scientific">Brucella anthropi (strain ATCC 49188 / DSM 6882 / CCUG 24695 / JCM 21032 / LMG 3331 / NBRC 15819 / NCTC 12168 / Alc 37)</name>
    <name type="common">Ochrobactrum anthropi</name>
    <dbReference type="NCBI Taxonomy" id="439375"/>
    <lineage>
        <taxon>Bacteria</taxon>
        <taxon>Pseudomonadati</taxon>
        <taxon>Pseudomonadota</taxon>
        <taxon>Alphaproteobacteria</taxon>
        <taxon>Hyphomicrobiales</taxon>
        <taxon>Brucellaceae</taxon>
        <taxon>Brucella/Ochrobactrum group</taxon>
        <taxon>Brucella</taxon>
    </lineage>
</organism>
<dbReference type="EC" id="3.6.1.27" evidence="1"/>
<dbReference type="EMBL" id="CP000758">
    <property type="protein sequence ID" value="ABS14056.1"/>
    <property type="molecule type" value="Genomic_DNA"/>
</dbReference>
<dbReference type="RefSeq" id="WP_010659405.1">
    <property type="nucleotide sequence ID" value="NC_009667.1"/>
</dbReference>
<dbReference type="SMR" id="A6WYK2"/>
<dbReference type="STRING" id="439375.Oant_1339"/>
<dbReference type="KEGG" id="oan:Oant_1339"/>
<dbReference type="eggNOG" id="COG1968">
    <property type="taxonomic scope" value="Bacteria"/>
</dbReference>
<dbReference type="HOGENOM" id="CLU_060296_2_0_5"/>
<dbReference type="PhylomeDB" id="A6WYK2"/>
<dbReference type="Proteomes" id="UP000002301">
    <property type="component" value="Chromosome 1"/>
</dbReference>
<dbReference type="GO" id="GO:0005886">
    <property type="term" value="C:plasma membrane"/>
    <property type="evidence" value="ECO:0007669"/>
    <property type="project" value="UniProtKB-SubCell"/>
</dbReference>
<dbReference type="GO" id="GO:0050380">
    <property type="term" value="F:undecaprenyl-diphosphatase activity"/>
    <property type="evidence" value="ECO:0007669"/>
    <property type="project" value="UniProtKB-UniRule"/>
</dbReference>
<dbReference type="GO" id="GO:0071555">
    <property type="term" value="P:cell wall organization"/>
    <property type="evidence" value="ECO:0007669"/>
    <property type="project" value="UniProtKB-KW"/>
</dbReference>
<dbReference type="GO" id="GO:0009252">
    <property type="term" value="P:peptidoglycan biosynthetic process"/>
    <property type="evidence" value="ECO:0007669"/>
    <property type="project" value="UniProtKB-KW"/>
</dbReference>
<dbReference type="GO" id="GO:0008360">
    <property type="term" value="P:regulation of cell shape"/>
    <property type="evidence" value="ECO:0007669"/>
    <property type="project" value="UniProtKB-KW"/>
</dbReference>
<dbReference type="GO" id="GO:0046677">
    <property type="term" value="P:response to antibiotic"/>
    <property type="evidence" value="ECO:0007669"/>
    <property type="project" value="UniProtKB-UniRule"/>
</dbReference>
<dbReference type="HAMAP" id="MF_01006">
    <property type="entry name" value="Undec_diphosphatase"/>
    <property type="match status" value="1"/>
</dbReference>
<dbReference type="InterPro" id="IPR003824">
    <property type="entry name" value="UppP"/>
</dbReference>
<dbReference type="NCBIfam" id="NF001389">
    <property type="entry name" value="PRK00281.1-2"/>
    <property type="match status" value="1"/>
</dbReference>
<dbReference type="NCBIfam" id="NF001390">
    <property type="entry name" value="PRK00281.1-4"/>
    <property type="match status" value="1"/>
</dbReference>
<dbReference type="NCBIfam" id="TIGR00753">
    <property type="entry name" value="undec_PP_bacA"/>
    <property type="match status" value="1"/>
</dbReference>
<dbReference type="PANTHER" id="PTHR30622">
    <property type="entry name" value="UNDECAPRENYL-DIPHOSPHATASE"/>
    <property type="match status" value="1"/>
</dbReference>
<dbReference type="PANTHER" id="PTHR30622:SF3">
    <property type="entry name" value="UNDECAPRENYL-DIPHOSPHATASE"/>
    <property type="match status" value="1"/>
</dbReference>
<dbReference type="Pfam" id="PF02673">
    <property type="entry name" value="BacA"/>
    <property type="match status" value="1"/>
</dbReference>
<proteinExistence type="inferred from homology"/>
<reference key="1">
    <citation type="journal article" date="2011" name="J. Bacteriol.">
        <title>Genome of Ochrobactrum anthropi ATCC 49188 T, a versatile opportunistic pathogen and symbiont of several eukaryotic hosts.</title>
        <authorList>
            <person name="Chain P.S."/>
            <person name="Lang D.M."/>
            <person name="Comerci D.J."/>
            <person name="Malfatti S.A."/>
            <person name="Vergez L.M."/>
            <person name="Shin M."/>
            <person name="Ugalde R.A."/>
            <person name="Garcia E."/>
            <person name="Tolmasky M.E."/>
        </authorList>
    </citation>
    <scope>NUCLEOTIDE SEQUENCE [LARGE SCALE GENOMIC DNA]</scope>
    <source>
        <strain>ATCC 49188 / DSM 6882 / CCUG 24695 / JCM 21032 / LMG 3331 / NBRC 15819 / NCTC 12168 / Alc 37</strain>
    </source>
</reference>
<keyword id="KW-0046">Antibiotic resistance</keyword>
<keyword id="KW-0997">Cell inner membrane</keyword>
<keyword id="KW-1003">Cell membrane</keyword>
<keyword id="KW-0133">Cell shape</keyword>
<keyword id="KW-0961">Cell wall biogenesis/degradation</keyword>
<keyword id="KW-0378">Hydrolase</keyword>
<keyword id="KW-0472">Membrane</keyword>
<keyword id="KW-0573">Peptidoglycan synthesis</keyword>
<keyword id="KW-1185">Reference proteome</keyword>
<keyword id="KW-0812">Transmembrane</keyword>
<keyword id="KW-1133">Transmembrane helix</keyword>
<accession>A6WYK2</accession>
<feature type="chain" id="PRO_1000062806" description="Undecaprenyl-diphosphatase">
    <location>
        <begin position="1"/>
        <end position="268"/>
    </location>
</feature>
<feature type="transmembrane region" description="Helical" evidence="1">
    <location>
        <begin position="3"/>
        <end position="23"/>
    </location>
</feature>
<feature type="transmembrane region" description="Helical" evidence="1">
    <location>
        <begin position="46"/>
        <end position="66"/>
    </location>
</feature>
<feature type="transmembrane region" description="Helical" evidence="1">
    <location>
        <begin position="84"/>
        <end position="104"/>
    </location>
</feature>
<feature type="transmembrane region" description="Helical" evidence="1">
    <location>
        <begin position="107"/>
        <end position="127"/>
    </location>
</feature>
<feature type="transmembrane region" description="Helical" evidence="1">
    <location>
        <begin position="144"/>
        <end position="164"/>
    </location>
</feature>
<feature type="transmembrane region" description="Helical" evidence="1">
    <location>
        <begin position="184"/>
        <end position="204"/>
    </location>
</feature>
<feature type="transmembrane region" description="Helical" evidence="1">
    <location>
        <begin position="218"/>
        <end position="238"/>
    </location>
</feature>
<feature type="transmembrane region" description="Helical" evidence="1">
    <location>
        <begin position="248"/>
        <end position="268"/>
    </location>
</feature>
<gene>
    <name evidence="1" type="primary">uppP</name>
    <name type="ordered locus">Oant_1339</name>
</gene>
<name>UPPP_BRUA4</name>
<evidence type="ECO:0000255" key="1">
    <source>
        <dbReference type="HAMAP-Rule" id="MF_01006"/>
    </source>
</evidence>
<protein>
    <recommendedName>
        <fullName evidence="1">Undecaprenyl-diphosphatase</fullName>
        <ecNumber evidence="1">3.6.1.27</ecNumber>
    </recommendedName>
    <alternativeName>
        <fullName evidence="1">Bacitracin resistance protein</fullName>
    </alternativeName>
    <alternativeName>
        <fullName evidence="1">Undecaprenyl pyrophosphate phosphatase</fullName>
    </alternativeName>
</protein>
<sequence length="268" mass="29307">MDVFNLLEAAFLGLIEGLTEFIPVSSTGHLLLIGHFLGFESTGKTFEVLIQLGAILAILTVYSAKLLKILTDFPRDARTRRFVFGILVAFLPAAVIGALAHGFIKSVLFETPMLVCIMLIIGGFILLWVDQLNLRPRYHDVMDYPLPMCLAIGFIQCLAMIPGVSRSGSTIVGSLLLGADKRSAAEFSFFLAMPTMAGAFAYDLYKSRNILSLNDGALIGVGFVMAFISGVFVVRYLLDYVSRHGFKLFGWWRLIVGSVGLAALLVWG</sequence>